<dbReference type="EMBL" id="CP000087">
    <property type="protein sequence ID" value="ABE04469.1"/>
    <property type="molecule type" value="Genomic_DNA"/>
</dbReference>
<dbReference type="RefSeq" id="WP_011477078.1">
    <property type="nucleotide sequence ID" value="NC_007940.1"/>
</dbReference>
<dbReference type="SMR" id="Q1RJJ5"/>
<dbReference type="KEGG" id="rbe:RBE_0388"/>
<dbReference type="eggNOG" id="COG0249">
    <property type="taxonomic scope" value="Bacteria"/>
</dbReference>
<dbReference type="HOGENOM" id="CLU_002472_4_0_5"/>
<dbReference type="OrthoDB" id="9802448at2"/>
<dbReference type="Proteomes" id="UP000001951">
    <property type="component" value="Chromosome"/>
</dbReference>
<dbReference type="GO" id="GO:0005524">
    <property type="term" value="F:ATP binding"/>
    <property type="evidence" value="ECO:0007669"/>
    <property type="project" value="UniProtKB-UniRule"/>
</dbReference>
<dbReference type="GO" id="GO:0140664">
    <property type="term" value="F:ATP-dependent DNA damage sensor activity"/>
    <property type="evidence" value="ECO:0007669"/>
    <property type="project" value="InterPro"/>
</dbReference>
<dbReference type="GO" id="GO:0003684">
    <property type="term" value="F:damaged DNA binding"/>
    <property type="evidence" value="ECO:0007669"/>
    <property type="project" value="UniProtKB-UniRule"/>
</dbReference>
<dbReference type="GO" id="GO:0030983">
    <property type="term" value="F:mismatched DNA binding"/>
    <property type="evidence" value="ECO:0007669"/>
    <property type="project" value="InterPro"/>
</dbReference>
<dbReference type="GO" id="GO:0006298">
    <property type="term" value="P:mismatch repair"/>
    <property type="evidence" value="ECO:0007669"/>
    <property type="project" value="UniProtKB-UniRule"/>
</dbReference>
<dbReference type="CDD" id="cd03284">
    <property type="entry name" value="ABC_MutS1"/>
    <property type="match status" value="1"/>
</dbReference>
<dbReference type="FunFam" id="3.40.1170.10:FF:000001">
    <property type="entry name" value="DNA mismatch repair protein MutS"/>
    <property type="match status" value="1"/>
</dbReference>
<dbReference type="FunFam" id="3.40.50.300:FF:000870">
    <property type="entry name" value="MutS protein homolog 4"/>
    <property type="match status" value="1"/>
</dbReference>
<dbReference type="Gene3D" id="1.10.1420.10">
    <property type="match status" value="2"/>
</dbReference>
<dbReference type="Gene3D" id="6.10.140.430">
    <property type="match status" value="1"/>
</dbReference>
<dbReference type="Gene3D" id="3.40.1170.10">
    <property type="entry name" value="DNA repair protein MutS, domain I"/>
    <property type="match status" value="1"/>
</dbReference>
<dbReference type="Gene3D" id="3.30.420.110">
    <property type="entry name" value="MutS, connector domain"/>
    <property type="match status" value="1"/>
</dbReference>
<dbReference type="Gene3D" id="3.40.50.300">
    <property type="entry name" value="P-loop containing nucleotide triphosphate hydrolases"/>
    <property type="match status" value="1"/>
</dbReference>
<dbReference type="HAMAP" id="MF_00096">
    <property type="entry name" value="MutS"/>
    <property type="match status" value="1"/>
</dbReference>
<dbReference type="InterPro" id="IPR005748">
    <property type="entry name" value="DNA_mismatch_repair_MutS"/>
</dbReference>
<dbReference type="InterPro" id="IPR007695">
    <property type="entry name" value="DNA_mismatch_repair_MutS-lik_N"/>
</dbReference>
<dbReference type="InterPro" id="IPR017261">
    <property type="entry name" value="DNA_mismatch_repair_MutS/MSH"/>
</dbReference>
<dbReference type="InterPro" id="IPR000432">
    <property type="entry name" value="DNA_mismatch_repair_MutS_C"/>
</dbReference>
<dbReference type="InterPro" id="IPR007861">
    <property type="entry name" value="DNA_mismatch_repair_MutS_clamp"/>
</dbReference>
<dbReference type="InterPro" id="IPR007696">
    <property type="entry name" value="DNA_mismatch_repair_MutS_core"/>
</dbReference>
<dbReference type="InterPro" id="IPR016151">
    <property type="entry name" value="DNA_mismatch_repair_MutS_N"/>
</dbReference>
<dbReference type="InterPro" id="IPR036187">
    <property type="entry name" value="DNA_mismatch_repair_MutS_sf"/>
</dbReference>
<dbReference type="InterPro" id="IPR007860">
    <property type="entry name" value="DNA_mmatch_repair_MutS_con_dom"/>
</dbReference>
<dbReference type="InterPro" id="IPR045076">
    <property type="entry name" value="MutS"/>
</dbReference>
<dbReference type="InterPro" id="IPR036678">
    <property type="entry name" value="MutS_con_dom_sf"/>
</dbReference>
<dbReference type="InterPro" id="IPR027417">
    <property type="entry name" value="P-loop_NTPase"/>
</dbReference>
<dbReference type="NCBIfam" id="TIGR01070">
    <property type="entry name" value="mutS1"/>
    <property type="match status" value="1"/>
</dbReference>
<dbReference type="NCBIfam" id="NF003810">
    <property type="entry name" value="PRK05399.1"/>
    <property type="match status" value="1"/>
</dbReference>
<dbReference type="PANTHER" id="PTHR11361:SF34">
    <property type="entry name" value="DNA MISMATCH REPAIR PROTEIN MSH1, MITOCHONDRIAL"/>
    <property type="match status" value="1"/>
</dbReference>
<dbReference type="PANTHER" id="PTHR11361">
    <property type="entry name" value="DNA MISMATCH REPAIR PROTEIN MUTS FAMILY MEMBER"/>
    <property type="match status" value="1"/>
</dbReference>
<dbReference type="Pfam" id="PF01624">
    <property type="entry name" value="MutS_I"/>
    <property type="match status" value="1"/>
</dbReference>
<dbReference type="Pfam" id="PF05188">
    <property type="entry name" value="MutS_II"/>
    <property type="match status" value="1"/>
</dbReference>
<dbReference type="Pfam" id="PF05192">
    <property type="entry name" value="MutS_III"/>
    <property type="match status" value="1"/>
</dbReference>
<dbReference type="Pfam" id="PF05190">
    <property type="entry name" value="MutS_IV"/>
    <property type="match status" value="1"/>
</dbReference>
<dbReference type="Pfam" id="PF00488">
    <property type="entry name" value="MutS_V"/>
    <property type="match status" value="1"/>
</dbReference>
<dbReference type="PIRSF" id="PIRSF037677">
    <property type="entry name" value="DNA_mis_repair_Msh6"/>
    <property type="match status" value="1"/>
</dbReference>
<dbReference type="SMART" id="SM00534">
    <property type="entry name" value="MUTSac"/>
    <property type="match status" value="1"/>
</dbReference>
<dbReference type="SMART" id="SM00533">
    <property type="entry name" value="MUTSd"/>
    <property type="match status" value="1"/>
</dbReference>
<dbReference type="SUPFAM" id="SSF55271">
    <property type="entry name" value="DNA repair protein MutS, domain I"/>
    <property type="match status" value="1"/>
</dbReference>
<dbReference type="SUPFAM" id="SSF53150">
    <property type="entry name" value="DNA repair protein MutS, domain II"/>
    <property type="match status" value="1"/>
</dbReference>
<dbReference type="SUPFAM" id="SSF48334">
    <property type="entry name" value="DNA repair protein MutS, domain III"/>
    <property type="match status" value="1"/>
</dbReference>
<dbReference type="SUPFAM" id="SSF52540">
    <property type="entry name" value="P-loop containing nucleoside triphosphate hydrolases"/>
    <property type="match status" value="1"/>
</dbReference>
<dbReference type="PROSITE" id="PS00486">
    <property type="entry name" value="DNA_MISMATCH_REPAIR_2"/>
    <property type="match status" value="1"/>
</dbReference>
<keyword id="KW-0067">ATP-binding</keyword>
<keyword id="KW-0227">DNA damage</keyword>
<keyword id="KW-0234">DNA repair</keyword>
<keyword id="KW-0238">DNA-binding</keyword>
<keyword id="KW-0547">Nucleotide-binding</keyword>
<name>MUTS_RICBR</name>
<comment type="function">
    <text evidence="1">This protein is involved in the repair of mismatches in DNA. It is possible that it carries out the mismatch recognition step. This protein has a weak ATPase activity.</text>
</comment>
<comment type="similarity">
    <text evidence="1">Belongs to the DNA mismatch repair MutS family.</text>
</comment>
<evidence type="ECO:0000255" key="1">
    <source>
        <dbReference type="HAMAP-Rule" id="MF_00096"/>
    </source>
</evidence>
<proteinExistence type="inferred from homology"/>
<feature type="chain" id="PRO_0000277908" description="DNA mismatch repair protein MutS">
    <location>
        <begin position="1"/>
        <end position="888"/>
    </location>
</feature>
<feature type="binding site" evidence="1">
    <location>
        <begin position="641"/>
        <end position="648"/>
    </location>
    <ligand>
        <name>ATP</name>
        <dbReference type="ChEBI" id="CHEBI:30616"/>
    </ligand>
</feature>
<reference key="1">
    <citation type="journal article" date="2006" name="PLoS Genet.">
        <title>Genome sequence of Rickettsia bellii illuminates the role of amoebae in gene exchanges between intracellular pathogens.</title>
        <authorList>
            <person name="Ogata H."/>
            <person name="La Scola B."/>
            <person name="Audic S."/>
            <person name="Renesto P."/>
            <person name="Blanc G."/>
            <person name="Robert C."/>
            <person name="Fournier P.-E."/>
            <person name="Claverie J.-M."/>
            <person name="Raoult D."/>
        </authorList>
    </citation>
    <scope>NUCLEOTIDE SEQUENCE [LARGE SCALE GENOMIC DNA]</scope>
    <source>
        <strain>RML369-C</strain>
    </source>
</reference>
<protein>
    <recommendedName>
        <fullName evidence="1">DNA mismatch repair protein MutS</fullName>
    </recommendedName>
</protein>
<accession>Q1RJJ5</accession>
<gene>
    <name evidence="1" type="primary">mutS</name>
    <name type="ordered locus">RBE_0388</name>
</gene>
<sequence length="888" mass="100184">MNFQEFKHKYGYDAATKMMQQYLDIKFAHLDCLLLFRMGDFYEMFYEDAVLASGVLGIALTKRGKNGDEEVPMCGVPYHALENYLTKLIEENYKVAICDQLETPEEAKNRGGYKAVVNRNVTRIITPGTVIEENLITTVEPNYLASLVVPKNKDTAALCYADLSTSTIFVVNVPELEILNELARLKPREILLSEHLRSSDLASNISKQLNFRITYQVDSFFAVNKCEKIILDFYKMKDIKGVGEISNSQICAIGSILEYLTLTQKENIPNLPKPKIIDFHSYMTIDFSTRRNLEIVTNSCGGNKGSLLSTLNHTVTKQGGRLLYNFLSSPLTDTHKINQRLNITEFFHSNLDITAKVRELLKKTSDIERCLTRITMNRGSGRDLLSIKYTLETANSIKEIFFDNYGFELPSFIEKIVKPLIRNDELYNLIEESICEDAPNNLNDGGVIKHSYHPKVLQLHDLINNGKLHIEKLKDQYKKETGIDSLKISHNNVIGLFIDITAKNANKINDPKFIHRQTTVNSVRYTTAELQKLESDLVNAKTLVVSLEKELYEDICKRVTKQSDYLRILASSLSGIDVFCNFAYIASENDYTRPEFTDDLSFDIVKGRHPVVEEALNKERKSFVHNDCHLSEAERIWLITGPNMAGKSTFLRQNAIIAIIAQIGSFVPAKSARIGMVDKIFSRIGAADDLIKGQSTFMAEMLETSAILAQSTKNSLIILDEVGRGTSTYDGVSIAWSVLEYIHDKLKCRCLFATHYHELTIMDNFLPAMQNYTIAIEESGKDILFLHNIIAGAADRSYGIHVAALAGLPASVINRAEQILLKFEKNAAGKGKNILSTESNNLSLFAIESPKLQNSKLEEKFKTIDPDKLSPKEALELLYQLKSNFIKQ</sequence>
<organism>
    <name type="scientific">Rickettsia bellii (strain RML369-C)</name>
    <dbReference type="NCBI Taxonomy" id="336407"/>
    <lineage>
        <taxon>Bacteria</taxon>
        <taxon>Pseudomonadati</taxon>
        <taxon>Pseudomonadota</taxon>
        <taxon>Alphaproteobacteria</taxon>
        <taxon>Rickettsiales</taxon>
        <taxon>Rickettsiaceae</taxon>
        <taxon>Rickettsieae</taxon>
        <taxon>Rickettsia</taxon>
        <taxon>belli group</taxon>
    </lineage>
</organism>